<gene>
    <name evidence="8" type="primary">Nde1</name>
    <name type="synonym">Nude</name>
    <name type="synonym">Nude1</name>
</gene>
<feature type="chain" id="PRO_0000240204" description="Nuclear distribution protein nudE homolog 1">
    <location>
        <begin position="1"/>
        <end position="344"/>
    </location>
</feature>
<feature type="region of interest" description="Self-association" evidence="1">
    <location>
        <begin position="1"/>
        <end position="93"/>
    </location>
</feature>
<feature type="region of interest" description="Disordered" evidence="5">
    <location>
        <begin position="30"/>
        <end position="65"/>
    </location>
</feature>
<feature type="region of interest" description="Interaction with PAFAH1B1" evidence="1">
    <location>
        <begin position="88"/>
        <end position="156"/>
    </location>
</feature>
<feature type="region of interest" description="Interaction with CENPF" evidence="1">
    <location>
        <begin position="167"/>
        <end position="290"/>
    </location>
</feature>
<feature type="region of interest" description="Disordered" evidence="5">
    <location>
        <begin position="181"/>
        <end position="243"/>
    </location>
</feature>
<feature type="region of interest" description="Disordered" evidence="5">
    <location>
        <begin position="279"/>
        <end position="337"/>
    </location>
</feature>
<feature type="coiled-coil region" evidence="4">
    <location>
        <begin position="18"/>
        <end position="188"/>
    </location>
</feature>
<feature type="compositionally biased region" description="Basic and acidic residues" evidence="5">
    <location>
        <begin position="30"/>
        <end position="47"/>
    </location>
</feature>
<feature type="compositionally biased region" description="Polar residues" evidence="5">
    <location>
        <begin position="208"/>
        <end position="230"/>
    </location>
</feature>
<feature type="compositionally biased region" description="Basic and acidic residues" evidence="5">
    <location>
        <begin position="296"/>
        <end position="305"/>
    </location>
</feature>
<feature type="compositionally biased region" description="Low complexity" evidence="5">
    <location>
        <begin position="324"/>
        <end position="335"/>
    </location>
</feature>
<feature type="modified residue" description="Phosphoserine" evidence="3">
    <location>
        <position position="211"/>
    </location>
</feature>
<feature type="modified residue" description="Phosphothreonine" evidence="3">
    <location>
        <position position="215"/>
    </location>
</feature>
<feature type="modified residue" description="Phosphothreonine" evidence="3">
    <location>
        <position position="228"/>
    </location>
</feature>
<feature type="modified residue" description="Phosphothreonine" evidence="3">
    <location>
        <position position="243"/>
    </location>
</feature>
<feature type="modified residue" description="Phosphothreonine" evidence="3">
    <location>
        <position position="246"/>
    </location>
</feature>
<feature type="modified residue" description="Phosphoserine" evidence="3">
    <location>
        <position position="282"/>
    </location>
</feature>
<feature type="lipid moiety-binding region" description="S-palmitoyl cysteine; by ZDHHC2, ZDHHC3 and ZDHHC7" evidence="1">
    <location>
        <position position="274"/>
    </location>
</feature>
<dbReference type="EMBL" id="AF240463">
    <property type="protein sequence ID" value="AAG10105.1"/>
    <property type="molecule type" value="mRNA"/>
</dbReference>
<dbReference type="EMBL" id="BC081759">
    <property type="protein sequence ID" value="AAH81759.1"/>
    <property type="status" value="ALT_SEQ"/>
    <property type="molecule type" value="mRNA"/>
</dbReference>
<dbReference type="RefSeq" id="NP_445799.1">
    <property type="nucleotide sequence ID" value="NM_053347.2"/>
</dbReference>
<dbReference type="RefSeq" id="XP_006245911.1">
    <property type="nucleotide sequence ID" value="XM_006245849.3"/>
</dbReference>
<dbReference type="RefSeq" id="XP_006245912.1">
    <property type="nucleotide sequence ID" value="XM_006245850.3"/>
</dbReference>
<dbReference type="RefSeq" id="XP_006245913.1">
    <property type="nucleotide sequence ID" value="XM_006245851.3"/>
</dbReference>
<dbReference type="SMR" id="Q9ES39"/>
<dbReference type="FunCoup" id="Q9ES39">
    <property type="interactions" value="2285"/>
</dbReference>
<dbReference type="IntAct" id="Q9ES39">
    <property type="interactions" value="2"/>
</dbReference>
<dbReference type="STRING" id="10116.ENSRNOP00000073786"/>
<dbReference type="PhosphoSitePlus" id="Q9ES39"/>
<dbReference type="jPOST" id="Q9ES39"/>
<dbReference type="PaxDb" id="10116-ENSRNOP00000000029"/>
<dbReference type="GeneID" id="83836"/>
<dbReference type="KEGG" id="rno:83836"/>
<dbReference type="UCSC" id="RGD:620038">
    <property type="organism name" value="rat"/>
</dbReference>
<dbReference type="AGR" id="RGD:620038"/>
<dbReference type="CTD" id="54820"/>
<dbReference type="RGD" id="620038">
    <property type="gene designation" value="Nde1"/>
</dbReference>
<dbReference type="VEuPathDB" id="HostDB:ENSRNOG00000058007"/>
<dbReference type="eggNOG" id="KOG1853">
    <property type="taxonomic scope" value="Eukaryota"/>
</dbReference>
<dbReference type="HOGENOM" id="CLU_057872_1_0_1"/>
<dbReference type="InParanoid" id="Q9ES39"/>
<dbReference type="OrthoDB" id="5877028at2759"/>
<dbReference type="PhylomeDB" id="Q9ES39"/>
<dbReference type="TreeFam" id="TF325693"/>
<dbReference type="Reactome" id="R-RNO-141444">
    <property type="pathway name" value="Amplification of signal from unattached kinetochores via a MAD2 inhibitory signal"/>
</dbReference>
<dbReference type="Reactome" id="R-RNO-2467813">
    <property type="pathway name" value="Separation of Sister Chromatids"/>
</dbReference>
<dbReference type="Reactome" id="R-RNO-2500257">
    <property type="pathway name" value="Resolution of Sister Chromatid Cohesion"/>
</dbReference>
<dbReference type="Reactome" id="R-RNO-2565942">
    <property type="pathway name" value="Regulation of PLK1 Activity at G2/M Transition"/>
</dbReference>
<dbReference type="Reactome" id="R-RNO-380259">
    <property type="pathway name" value="Loss of Nlp from mitotic centrosomes"/>
</dbReference>
<dbReference type="Reactome" id="R-RNO-380270">
    <property type="pathway name" value="Recruitment of mitotic centrosome proteins and complexes"/>
</dbReference>
<dbReference type="Reactome" id="R-RNO-380284">
    <property type="pathway name" value="Loss of proteins required for interphase microtubule organization from the centrosome"/>
</dbReference>
<dbReference type="Reactome" id="R-RNO-380320">
    <property type="pathway name" value="Recruitment of NuMA to mitotic centrosomes"/>
</dbReference>
<dbReference type="Reactome" id="R-RNO-5620912">
    <property type="pathway name" value="Anchoring of the basal body to the plasma membrane"/>
</dbReference>
<dbReference type="Reactome" id="R-RNO-5663220">
    <property type="pathway name" value="RHO GTPases Activate Formins"/>
</dbReference>
<dbReference type="Reactome" id="R-RNO-68877">
    <property type="pathway name" value="Mitotic Prometaphase"/>
</dbReference>
<dbReference type="Reactome" id="R-RNO-8854518">
    <property type="pathway name" value="AURKA Activation by TPX2"/>
</dbReference>
<dbReference type="Reactome" id="R-RNO-9648025">
    <property type="pathway name" value="EML4 and NUDC in mitotic spindle formation"/>
</dbReference>
<dbReference type="PRO" id="PR:Q9ES39"/>
<dbReference type="Proteomes" id="UP000002494">
    <property type="component" value="Chromosome 10"/>
</dbReference>
<dbReference type="Bgee" id="ENSRNOG00000058007">
    <property type="expression patterns" value="Expressed in thymus and 19 other cell types or tissues"/>
</dbReference>
<dbReference type="GO" id="GO:0005813">
    <property type="term" value="C:centrosome"/>
    <property type="evidence" value="ECO:0000250"/>
    <property type="project" value="UniProtKB"/>
</dbReference>
<dbReference type="GO" id="GO:0032154">
    <property type="term" value="C:cleavage furrow"/>
    <property type="evidence" value="ECO:0007669"/>
    <property type="project" value="UniProtKB-SubCell"/>
</dbReference>
<dbReference type="GO" id="GO:0030659">
    <property type="term" value="C:cytoplasmic vesicle membrane"/>
    <property type="evidence" value="ECO:0007669"/>
    <property type="project" value="UniProtKB-SubCell"/>
</dbReference>
<dbReference type="GO" id="GO:0005871">
    <property type="term" value="C:kinesin complex"/>
    <property type="evidence" value="ECO:0000318"/>
    <property type="project" value="GO_Central"/>
</dbReference>
<dbReference type="GO" id="GO:0000776">
    <property type="term" value="C:kinetochore"/>
    <property type="evidence" value="ECO:0000266"/>
    <property type="project" value="RGD"/>
</dbReference>
<dbReference type="GO" id="GO:0005874">
    <property type="term" value="C:microtubule"/>
    <property type="evidence" value="ECO:0007669"/>
    <property type="project" value="UniProtKB-KW"/>
</dbReference>
<dbReference type="GO" id="GO:0005815">
    <property type="term" value="C:microtubule organizing center"/>
    <property type="evidence" value="ECO:0000266"/>
    <property type="project" value="RGD"/>
</dbReference>
<dbReference type="GO" id="GO:0005819">
    <property type="term" value="C:spindle"/>
    <property type="evidence" value="ECO:0000266"/>
    <property type="project" value="RGD"/>
</dbReference>
<dbReference type="GO" id="GO:0031616">
    <property type="term" value="C:spindle pole centrosome"/>
    <property type="evidence" value="ECO:0000250"/>
    <property type="project" value="UniProtKB"/>
</dbReference>
<dbReference type="GO" id="GO:0045202">
    <property type="term" value="C:synapse"/>
    <property type="evidence" value="ECO:0000266"/>
    <property type="project" value="RGD"/>
</dbReference>
<dbReference type="GO" id="GO:0042802">
    <property type="term" value="F:identical protein binding"/>
    <property type="evidence" value="ECO:0000266"/>
    <property type="project" value="RGD"/>
</dbReference>
<dbReference type="GO" id="GO:0008017">
    <property type="term" value="F:microtubule binding"/>
    <property type="evidence" value="ECO:0000250"/>
    <property type="project" value="UniProtKB"/>
</dbReference>
<dbReference type="GO" id="GO:0019904">
    <property type="term" value="F:protein domain specific binding"/>
    <property type="evidence" value="ECO:0000315"/>
    <property type="project" value="RGD"/>
</dbReference>
<dbReference type="GO" id="GO:0051301">
    <property type="term" value="P:cell division"/>
    <property type="evidence" value="ECO:0007669"/>
    <property type="project" value="UniProtKB-KW"/>
</dbReference>
<dbReference type="GO" id="GO:0016477">
    <property type="term" value="P:cell migration"/>
    <property type="evidence" value="ECO:0000318"/>
    <property type="project" value="GO_Central"/>
</dbReference>
<dbReference type="GO" id="GO:0051298">
    <property type="term" value="P:centrosome duplication"/>
    <property type="evidence" value="ECO:0000250"/>
    <property type="project" value="UniProtKB"/>
</dbReference>
<dbReference type="GO" id="GO:0051642">
    <property type="term" value="P:centrosome localization"/>
    <property type="evidence" value="ECO:0000318"/>
    <property type="project" value="GO_Central"/>
</dbReference>
<dbReference type="GO" id="GO:0021987">
    <property type="term" value="P:cerebral cortex development"/>
    <property type="evidence" value="ECO:0000250"/>
    <property type="project" value="UniProtKB"/>
</dbReference>
<dbReference type="GO" id="GO:0007059">
    <property type="term" value="P:chromosome segregation"/>
    <property type="evidence" value="ECO:0000318"/>
    <property type="project" value="GO_Central"/>
</dbReference>
<dbReference type="GO" id="GO:0051303">
    <property type="term" value="P:establishment of chromosome localization"/>
    <property type="evidence" value="ECO:0000266"/>
    <property type="project" value="RGD"/>
</dbReference>
<dbReference type="GO" id="GO:0000132">
    <property type="term" value="P:establishment of mitotic spindle orientation"/>
    <property type="evidence" value="ECO:0000266"/>
    <property type="project" value="RGD"/>
</dbReference>
<dbReference type="GO" id="GO:0030900">
    <property type="term" value="P:forebrain development"/>
    <property type="evidence" value="ECO:0000266"/>
    <property type="project" value="RGD"/>
</dbReference>
<dbReference type="GO" id="GO:0007020">
    <property type="term" value="P:microtubule nucleation"/>
    <property type="evidence" value="ECO:0000266"/>
    <property type="project" value="RGD"/>
</dbReference>
<dbReference type="GO" id="GO:0031023">
    <property type="term" value="P:microtubule organizing center organization"/>
    <property type="evidence" value="ECO:0000266"/>
    <property type="project" value="RGD"/>
</dbReference>
<dbReference type="GO" id="GO:0007100">
    <property type="term" value="P:mitotic centrosome separation"/>
    <property type="evidence" value="ECO:0000318"/>
    <property type="project" value="GO_Central"/>
</dbReference>
<dbReference type="GO" id="GO:0007405">
    <property type="term" value="P:neuroblast proliferation"/>
    <property type="evidence" value="ECO:0000266"/>
    <property type="project" value="RGD"/>
</dbReference>
<dbReference type="GO" id="GO:0001764">
    <property type="term" value="P:neuron migration"/>
    <property type="evidence" value="ECO:0000266"/>
    <property type="project" value="RGD"/>
</dbReference>
<dbReference type="GO" id="GO:0047496">
    <property type="term" value="P:vesicle transport along microtubule"/>
    <property type="evidence" value="ECO:0000266"/>
    <property type="project" value="RGD"/>
</dbReference>
<dbReference type="Gene3D" id="6.10.250.1080">
    <property type="match status" value="1"/>
</dbReference>
<dbReference type="InterPro" id="IPR033494">
    <property type="entry name" value="NUDE"/>
</dbReference>
<dbReference type="InterPro" id="IPR006964">
    <property type="entry name" value="NUDE_dom"/>
</dbReference>
<dbReference type="PANTHER" id="PTHR10921">
    <property type="entry name" value="NUCLEAR DISTRIBUTION PROTEIN NUDE HOMOLOG 1"/>
    <property type="match status" value="1"/>
</dbReference>
<dbReference type="PANTHER" id="PTHR10921:SF2">
    <property type="entry name" value="NUCLEAR DISTRIBUTION PROTEIN NUDE HOMOLOG 1"/>
    <property type="match status" value="1"/>
</dbReference>
<dbReference type="Pfam" id="PF04880">
    <property type="entry name" value="NUDE_C"/>
    <property type="match status" value="1"/>
</dbReference>
<accession>Q9ES39</accession>
<accession>Q642F3</accession>
<protein>
    <recommendedName>
        <fullName>Nuclear distribution protein nudE homolog 1</fullName>
        <shortName>NudE</shortName>
        <shortName>rNudE</shortName>
    </recommendedName>
</protein>
<evidence type="ECO:0000250" key="1"/>
<evidence type="ECO:0000250" key="2">
    <source>
        <dbReference type="UniProtKB" id="Q9CZA6"/>
    </source>
</evidence>
<evidence type="ECO:0000250" key="3">
    <source>
        <dbReference type="UniProtKB" id="Q9NXR1"/>
    </source>
</evidence>
<evidence type="ECO:0000255" key="4"/>
<evidence type="ECO:0000256" key="5">
    <source>
        <dbReference type="SAM" id="MobiDB-lite"/>
    </source>
</evidence>
<evidence type="ECO:0000269" key="6">
    <source>
    </source>
</evidence>
<evidence type="ECO:0000305" key="7"/>
<evidence type="ECO:0000312" key="8">
    <source>
        <dbReference type="RGD" id="620038"/>
    </source>
</evidence>
<name>NDE1_RAT</name>
<comment type="function">
    <text evidence="3">Required for centrosome duplication and formation and function of the mitotic spindle. Essential for the development of the cerebral cortex. May regulate the production of neurons by controlling the orientation of the mitotic spindle during division of cortical neuronal progenitors of the proliferative ventricular zone of the brain. Orientation of the division plane perpendicular to the layers of the cortex gives rise to two proliferative neuronal progenitors whereas parallel orientation of the division plane yields one proliferative neuronal progenitor and a postmitotic neuron. A premature shift towards a neuronal fate within the progenitor population may result in an overall reduction in the final number of neurons and an increase in the number of neurons in the deeper layers of the cortex. Acts as a RAB9A/B effector that tethers RAB9-associated late endosomes to the dynein motor for their retrograde transport to the trans-Golgi network.</text>
</comment>
<comment type="subunit">
    <text evidence="2 3">Homodimer (By similarity). Interacts with CNTRL, LIS1, dynein, SLMAP and TCP1 (By similarity). Interacts with CENPF, dynactin, tubulin gamma, PAFAH1B1, PCM1 and PCNT. Interacts with ZNF365. Interacts with GTP-bound RAB9A and RAB9B; the interaction leads to RAB9-dynein motor tethering (By similarity). Interacts (via C-terminus) with MCRS1 (via C-terminus); phosphorylation of NDE1 inhibits the interaction (By similarity).</text>
</comment>
<comment type="interaction">
    <interactant intactId="EBI-1007897">
        <id>Q9ES39</id>
    </interactant>
    <interactant intactId="EBI-1007886">
        <id>P43033</id>
        <label>PAFAH1B1</label>
    </interactant>
    <organismsDiffer>true</organismsDiffer>
    <experiments>2</experiments>
</comment>
<comment type="subcellular location">
    <subcellularLocation>
        <location evidence="1">Cytoplasm</location>
        <location evidence="1">Cytoskeleton</location>
    </subcellularLocation>
    <subcellularLocation>
        <location evidence="1">Cytoplasm</location>
        <location evidence="1">Cytoskeleton</location>
        <location evidence="1">Microtubule organizing center</location>
        <location evidence="1">Centrosome</location>
    </subcellularLocation>
    <subcellularLocation>
        <location evidence="1">Cytoplasm</location>
        <location evidence="1">Cytoskeleton</location>
        <location evidence="1">Spindle</location>
    </subcellularLocation>
    <subcellularLocation>
        <location evidence="1">Chromosome</location>
        <location evidence="1">Centromere</location>
        <location evidence="1">Kinetochore</location>
    </subcellularLocation>
    <subcellularLocation>
        <location evidence="1">Cleavage furrow</location>
    </subcellularLocation>
    <subcellularLocation>
        <location evidence="3">Cytoplasmic vesicle membrane</location>
    </subcellularLocation>
    <text evidence="1 3">Localizes to the interphase and S phase centrosome. During mitosis, partially associated with the mitotic spindle. Concentrates at the plus ends of microtubules coincident with kinetochores in metaphase and anaphase in a CENPF-dependent manner. Also localizes to the cleavage furrow during cytokinesis (By similarity). Also localizes to the cleavage furrow during cytokinesis. Colocalizes with RAB9A to membrane vesicles (By similarity).</text>
</comment>
<comment type="tissue specificity">
    <text evidence="6">Expressed in brain, heart, kidney, liver, lung, skeletal muscle, spleen and testis.</text>
</comment>
<comment type="PTM">
    <text evidence="2 3">Phosphorylated in mitosis (By similarity). Phosphorylation at Thr-246 is essential for the G2/M transition (By similarity).</text>
</comment>
<comment type="similarity">
    <text evidence="7">Belongs to the nudE family.</text>
</comment>
<comment type="sequence caution" evidence="7">
    <conflict type="miscellaneous discrepancy">
        <sequence resource="EMBL-CDS" id="AAH81759"/>
    </conflict>
    <text>Intron retention.</text>
</comment>
<reference key="1">
    <citation type="journal article" date="2000" name="FEBS Lett.">
        <title>Direct association of LIS1, the lissencephaly gene product, with a mammalian homologue of a fungal nuclear distribution protein, rNUDE.</title>
        <authorList>
            <person name="Kitagawa M."/>
            <person name="Umezu M."/>
            <person name="Aoki J."/>
            <person name="Koizumi H."/>
            <person name="Arai H."/>
            <person name="Inoue K."/>
        </authorList>
    </citation>
    <scope>NUCLEOTIDE SEQUENCE [MRNA]</scope>
    <scope>INTERACTION WITH PAFAH1B1</scope>
    <scope>TISSUE SPECIFICITY</scope>
    <source>
        <strain>Sprague-Dawley</strain>
        <tissue>Liver</tissue>
    </source>
</reference>
<reference key="2">
    <citation type="journal article" date="2004" name="Genome Res.">
        <title>The status, quality, and expansion of the NIH full-length cDNA project: the Mammalian Gene Collection (MGC).</title>
        <authorList>
            <consortium name="The MGC Project Team"/>
        </authorList>
    </citation>
    <scope>NUCLEOTIDE SEQUENCE [LARGE SCALE MRNA] OF 1-314</scope>
    <source>
        <tissue>Heart</tissue>
    </source>
</reference>
<sequence length="344" mass="38528">MEDSGKTFGSEEEETNYWRDLAMTYKQRAENTQEELREFQEGSREYEAELETQLQQAETRNRDLLSENNRLRMELESVKEKFEMQHSEGYRQISALEDDLAHTKAIKDQLQKYIRELEQANDDLERAKRATIMSLEDFEQRLNQAIERNAFLESELDEKENLLESVQRLKDEARDLRQELAVQQKQDKPRTPMPSSGETKRTDMAVQATGSAPSTPITHQGSSSGLNTPETFRCGLGSPSSGTPLTPAARISALNIVGDLLRKVGALESKLASCKNFMYDQSPSRKSGPALGRGTKNRDGIDRRPGSTAVGDKGSGKRLEFAKPSSQLSSPALPSTQGVVKLLL</sequence>
<proteinExistence type="evidence at protein level"/>
<keyword id="KW-0131">Cell cycle</keyword>
<keyword id="KW-0132">Cell division</keyword>
<keyword id="KW-0137">Centromere</keyword>
<keyword id="KW-0158">Chromosome</keyword>
<keyword id="KW-0175">Coiled coil</keyword>
<keyword id="KW-0963">Cytoplasm</keyword>
<keyword id="KW-0968">Cytoplasmic vesicle</keyword>
<keyword id="KW-0206">Cytoskeleton</keyword>
<keyword id="KW-0217">Developmental protein</keyword>
<keyword id="KW-0221">Differentiation</keyword>
<keyword id="KW-0995">Kinetochore</keyword>
<keyword id="KW-0449">Lipoprotein</keyword>
<keyword id="KW-0472">Membrane</keyword>
<keyword id="KW-0493">Microtubule</keyword>
<keyword id="KW-0498">Mitosis</keyword>
<keyword id="KW-0524">Neurogenesis</keyword>
<keyword id="KW-0564">Palmitate</keyword>
<keyword id="KW-0597">Phosphoprotein</keyword>
<keyword id="KW-1185">Reference proteome</keyword>
<organism>
    <name type="scientific">Rattus norvegicus</name>
    <name type="common">Rat</name>
    <dbReference type="NCBI Taxonomy" id="10116"/>
    <lineage>
        <taxon>Eukaryota</taxon>
        <taxon>Metazoa</taxon>
        <taxon>Chordata</taxon>
        <taxon>Craniata</taxon>
        <taxon>Vertebrata</taxon>
        <taxon>Euteleostomi</taxon>
        <taxon>Mammalia</taxon>
        <taxon>Eutheria</taxon>
        <taxon>Euarchontoglires</taxon>
        <taxon>Glires</taxon>
        <taxon>Rodentia</taxon>
        <taxon>Myomorpha</taxon>
        <taxon>Muroidea</taxon>
        <taxon>Muridae</taxon>
        <taxon>Murinae</taxon>
        <taxon>Rattus</taxon>
    </lineage>
</organism>